<organism>
    <name type="scientific">Salmonella paratyphi A (strain ATCC 9150 / SARB42)</name>
    <dbReference type="NCBI Taxonomy" id="295319"/>
    <lineage>
        <taxon>Bacteria</taxon>
        <taxon>Pseudomonadati</taxon>
        <taxon>Pseudomonadota</taxon>
        <taxon>Gammaproteobacteria</taxon>
        <taxon>Enterobacterales</taxon>
        <taxon>Enterobacteriaceae</taxon>
        <taxon>Salmonella</taxon>
    </lineage>
</organism>
<feature type="chain" id="PRO_0000153442" description="Histidinol-phosphate aminotransferase">
    <location>
        <begin position="1"/>
        <end position="359"/>
    </location>
</feature>
<feature type="modified residue" description="N6-(pyridoxal phosphate)lysine" evidence="1">
    <location>
        <position position="217"/>
    </location>
</feature>
<sequence>MSTENTLSVADLARENIRNLVPYQSARRLGGNGDVWLNANEFPTAVEFQLTQQTLNRYPECQPKAVIENYAQYAGVKPEQVLVSRGADEGIELVIRAFCEPGKDAILYCPPTYGMYSVSAETIGVERRTVPALENWQLDLQGISDNLDGTKVAFVCSPNNPTGQLINPQDLRTLLELTRGKAIVVADEAYIEFCPQATLTGWLVEYPHLVILRTLSKAFALAGLRCGFTLANEEVINLLLKVIAPYPLSTPVADIAAQALSPQGINAMRDRVAQTVQERQYLVNALQQTACVEHVFDSETNYILARFTASSSVFKSLWDQGIILRDQNKQPSLSGCLRITVGTRQENQRVIDALRAEPV</sequence>
<accession>Q5PDP4</accession>
<keyword id="KW-0028">Amino-acid biosynthesis</keyword>
<keyword id="KW-0032">Aminotransferase</keyword>
<keyword id="KW-0368">Histidine biosynthesis</keyword>
<keyword id="KW-0663">Pyridoxal phosphate</keyword>
<keyword id="KW-0808">Transferase</keyword>
<protein>
    <recommendedName>
        <fullName evidence="1">Histidinol-phosphate aminotransferase</fullName>
        <ecNumber evidence="1">2.6.1.9</ecNumber>
    </recommendedName>
    <alternativeName>
        <fullName evidence="1">Imidazole acetol-phosphate transaminase</fullName>
    </alternativeName>
</protein>
<comment type="catalytic activity">
    <reaction evidence="1">
        <text>L-histidinol phosphate + 2-oxoglutarate = 3-(imidazol-4-yl)-2-oxopropyl phosphate + L-glutamate</text>
        <dbReference type="Rhea" id="RHEA:23744"/>
        <dbReference type="ChEBI" id="CHEBI:16810"/>
        <dbReference type="ChEBI" id="CHEBI:29985"/>
        <dbReference type="ChEBI" id="CHEBI:57766"/>
        <dbReference type="ChEBI" id="CHEBI:57980"/>
        <dbReference type="EC" id="2.6.1.9"/>
    </reaction>
</comment>
<comment type="cofactor">
    <cofactor evidence="1">
        <name>pyridoxal 5'-phosphate</name>
        <dbReference type="ChEBI" id="CHEBI:597326"/>
    </cofactor>
</comment>
<comment type="pathway">
    <text evidence="1">Amino-acid biosynthesis; L-histidine biosynthesis; L-histidine from 5-phospho-alpha-D-ribose 1-diphosphate: step 7/9.</text>
</comment>
<comment type="subunit">
    <text evidence="1">Homodimer.</text>
</comment>
<comment type="similarity">
    <text evidence="1">Belongs to the class-II pyridoxal-phosphate-dependent aminotransferase family. Histidinol-phosphate aminotransferase subfamily.</text>
</comment>
<evidence type="ECO:0000255" key="1">
    <source>
        <dbReference type="HAMAP-Rule" id="MF_01023"/>
    </source>
</evidence>
<reference key="1">
    <citation type="journal article" date="2004" name="Nat. Genet.">
        <title>Comparison of genome degradation in Paratyphi A and Typhi, human-restricted serovars of Salmonella enterica that cause typhoid.</title>
        <authorList>
            <person name="McClelland M."/>
            <person name="Sanderson K.E."/>
            <person name="Clifton S.W."/>
            <person name="Latreille P."/>
            <person name="Porwollik S."/>
            <person name="Sabo A."/>
            <person name="Meyer R."/>
            <person name="Bieri T."/>
            <person name="Ozersky P."/>
            <person name="McLellan M."/>
            <person name="Harkins C.R."/>
            <person name="Wang C."/>
            <person name="Nguyen C."/>
            <person name="Berghoff A."/>
            <person name="Elliott G."/>
            <person name="Kohlberg S."/>
            <person name="Strong C."/>
            <person name="Du F."/>
            <person name="Carter J."/>
            <person name="Kremizki C."/>
            <person name="Layman D."/>
            <person name="Leonard S."/>
            <person name="Sun H."/>
            <person name="Fulton L."/>
            <person name="Nash W."/>
            <person name="Miner T."/>
            <person name="Minx P."/>
            <person name="Delehaunty K."/>
            <person name="Fronick C."/>
            <person name="Magrini V."/>
            <person name="Nhan M."/>
            <person name="Warren W."/>
            <person name="Florea L."/>
            <person name="Spieth J."/>
            <person name="Wilson R.K."/>
        </authorList>
    </citation>
    <scope>NUCLEOTIDE SEQUENCE [LARGE SCALE GENOMIC DNA]</scope>
    <source>
        <strain>ATCC 9150 / SARB42</strain>
    </source>
</reference>
<name>HIS8_SALPA</name>
<gene>
    <name evidence="1" type="primary">hisC</name>
    <name type="ordered locus">SPA0798</name>
</gene>
<dbReference type="EC" id="2.6.1.9" evidence="1"/>
<dbReference type="EMBL" id="CP000026">
    <property type="protein sequence ID" value="AAV76791.1"/>
    <property type="molecule type" value="Genomic_DNA"/>
</dbReference>
<dbReference type="RefSeq" id="WP_000102699.1">
    <property type="nucleotide sequence ID" value="NC_006511.1"/>
</dbReference>
<dbReference type="SMR" id="Q5PDP4"/>
<dbReference type="KEGG" id="spt:SPA0798"/>
<dbReference type="HOGENOM" id="CLU_017584_3_1_6"/>
<dbReference type="UniPathway" id="UPA00031">
    <property type="reaction ID" value="UER00012"/>
</dbReference>
<dbReference type="Proteomes" id="UP000008185">
    <property type="component" value="Chromosome"/>
</dbReference>
<dbReference type="GO" id="GO:0004400">
    <property type="term" value="F:histidinol-phosphate transaminase activity"/>
    <property type="evidence" value="ECO:0007669"/>
    <property type="project" value="UniProtKB-UniRule"/>
</dbReference>
<dbReference type="GO" id="GO:0030170">
    <property type="term" value="F:pyridoxal phosphate binding"/>
    <property type="evidence" value="ECO:0007669"/>
    <property type="project" value="InterPro"/>
</dbReference>
<dbReference type="GO" id="GO:0000105">
    <property type="term" value="P:L-histidine biosynthetic process"/>
    <property type="evidence" value="ECO:0007669"/>
    <property type="project" value="UniProtKB-UniRule"/>
</dbReference>
<dbReference type="CDD" id="cd00609">
    <property type="entry name" value="AAT_like"/>
    <property type="match status" value="1"/>
</dbReference>
<dbReference type="FunFam" id="3.40.640.10:FF:000032">
    <property type="entry name" value="Histidinol-phosphate aminotransferase"/>
    <property type="match status" value="1"/>
</dbReference>
<dbReference type="Gene3D" id="3.90.1150.10">
    <property type="entry name" value="Aspartate Aminotransferase, domain 1"/>
    <property type="match status" value="1"/>
</dbReference>
<dbReference type="Gene3D" id="3.40.640.10">
    <property type="entry name" value="Type I PLP-dependent aspartate aminotransferase-like (Major domain)"/>
    <property type="match status" value="1"/>
</dbReference>
<dbReference type="HAMAP" id="MF_01023">
    <property type="entry name" value="HisC_aminotrans_2"/>
    <property type="match status" value="1"/>
</dbReference>
<dbReference type="InterPro" id="IPR001917">
    <property type="entry name" value="Aminotrans_II_pyridoxalP_BS"/>
</dbReference>
<dbReference type="InterPro" id="IPR004839">
    <property type="entry name" value="Aminotransferase_I/II_large"/>
</dbReference>
<dbReference type="InterPro" id="IPR005861">
    <property type="entry name" value="HisP_aminotrans"/>
</dbReference>
<dbReference type="InterPro" id="IPR015424">
    <property type="entry name" value="PyrdxlP-dep_Trfase"/>
</dbReference>
<dbReference type="InterPro" id="IPR015421">
    <property type="entry name" value="PyrdxlP-dep_Trfase_major"/>
</dbReference>
<dbReference type="InterPro" id="IPR015422">
    <property type="entry name" value="PyrdxlP-dep_Trfase_small"/>
</dbReference>
<dbReference type="NCBIfam" id="TIGR01141">
    <property type="entry name" value="hisC"/>
    <property type="match status" value="1"/>
</dbReference>
<dbReference type="PANTHER" id="PTHR42885:SF2">
    <property type="entry name" value="HISTIDINOL-PHOSPHATE AMINOTRANSFERASE"/>
    <property type="match status" value="1"/>
</dbReference>
<dbReference type="PANTHER" id="PTHR42885">
    <property type="entry name" value="HISTIDINOL-PHOSPHATE AMINOTRANSFERASE-RELATED"/>
    <property type="match status" value="1"/>
</dbReference>
<dbReference type="Pfam" id="PF00155">
    <property type="entry name" value="Aminotran_1_2"/>
    <property type="match status" value="1"/>
</dbReference>
<dbReference type="SUPFAM" id="SSF53383">
    <property type="entry name" value="PLP-dependent transferases"/>
    <property type="match status" value="1"/>
</dbReference>
<dbReference type="PROSITE" id="PS00599">
    <property type="entry name" value="AA_TRANSFER_CLASS_2"/>
    <property type="match status" value="1"/>
</dbReference>
<proteinExistence type="inferred from homology"/>